<keyword id="KW-0025">Alternative splicing</keyword>
<keyword id="KW-0067">ATP-binding</keyword>
<keyword id="KW-0131">Cell cycle</keyword>
<keyword id="KW-0132">Cell division</keyword>
<keyword id="KW-0966">Cell projection</keyword>
<keyword id="KW-0175">Coiled coil</keyword>
<keyword id="KW-0963">Cytoplasm</keyword>
<keyword id="KW-0206">Cytoskeleton</keyword>
<keyword id="KW-0493">Microtubule</keyword>
<keyword id="KW-0498">Mitosis</keyword>
<keyword id="KW-0505">Motor protein</keyword>
<keyword id="KW-0547">Nucleotide-binding</keyword>
<keyword id="KW-0539">Nucleus</keyword>
<keyword id="KW-0553">Oncogene</keyword>
<keyword id="KW-0597">Phosphoprotein</keyword>
<keyword id="KW-1185">Reference proteome</keyword>
<sequence>MESHLNPDGVPRPSYVFSADPIARPLEINFDGVKLDLSHEFSLVASNPAANSLGSKNYLQVCLRIRPFTQSEKEHEAEGCVQVLDSQSVLLKDPQSILGHLSEKSSGQVAQKFSFSKVFGPETSQKEFFLGCIMQPVKDLLEGHSRLIFTYGLTNSGKTYTFQGTEENIGILPRTLNVLFDSLQERLYTKMSFKPHRCREYLKLSSDQEKEESANKNTLLRQIKEVTIHNDSYDVLCGHLTNSLTIPEFEESVNSCDQSSLNVDNIKYSVWVSFFEIYNESIYDLFVPVSSKFQKRKMLRLSQDIKGYSFIKDLQWVQVSDSKEAYRLLKLGVKHQSVAFTKLNNASSRSHSIFTIRILQIEDSEIPRVTRVSELSLCDLAGSERSMKTQNEGERLREAGNINTSLLTLGKCINVLKNSEKSKVQHVPFRESKLTHYFQSFFTGKGKICMIINISQSCSAYDETLNVLKFSTTAQRVYVPDTLSSSQEKSFASNKSLQDVSLDSNLDNKILNVKRKTVSWENSLEDVLENEDLVEDLEENEETQNMETELTDEDSDKSLEECRVSTCHKKNKELLDLIEKLNKRLINENKEKLTLELKIREEVTQEFTQYWSQREADFKETLLHEREILEENAERRLAIFKDLVGKCDSQDEPTNRICDIELETEEAHNYVGVEDIFHSLQDDVTDIKKQAELAHLYITSLVDPQEAIACLQLKFNQVKAELAETKEELIKAQEELKNRESNSLVQALKTSSKVDTSLTSNKSTCNETSEMPKNSRAQTHSERKRLNEDGLQLGEPPAKKGLILVSPPITEEQNKMGEMQQSVSEVVEGNRVLKEKNEELKRLLTIGENELRNEKEEKAELNKQVVSLQQQLRFFEEKNSSLRADVEQIQASYNSAVAELQTQKAVNQEQRDRILKLSQEMETAARSIESNVSQIKQMQTKIDELRSLDSPSHISKIDLLNLQDLSSGAKGDNCLNTSQQLPGGDFSSTWVKEYHTQEISRENSFHASIEAIWEECKEIVKASSKKSHQIQGLEEQIEKLQVEVKGYREENSDLRAQESQGKNRDHQLKEKESLIQQLREELQEKSVSLRVQVQLVAEREQALSELSQDVTCYKAKIKDLEVIVETQKDECKRLVELEQSILEKESAILKLEANLKECEAKHQDHIRTNDLSAKEVKFREEVTRLANNLHDTKQLLQSKEEENEISRQETEKLKEELAANSILTQNLKADLQKKEEDCAELKEKFIDAKKQIEQVQREVSVMRDEEKLLRIKINELEKKKNQYSQDLDMKQRTIQQLKEQLSNQKMEEAVQQYEKVCKDLSVKEKLVEDMRLTLVEQEQTQAEQDRVLEAKSEEADWLATELDKWKEKFKDLETRSNQRLNTGTMDDLDVLTRKFSKLQDELQESEEKYKADRKKWLEEKAVLTTQAKEAENVRNREMRKYADDRERCLKLQNEVETLTAQLAEKNSELQKWREERDQLVTAVETQMKALLSSCKHKDEEIQELRKAAAKSTGTENQTMNPKPEYNDSVDLGGVETEPQSTSLEISRNTAEDGSVVLDSCEVSTENVQSTRFPKPELEIQFTPLQPNKMAVKHPGCPTPVTIKIPKARKRKSGEVEEDLVKCENKKNSTPRSNVKFPVSEHRNSPVKKEQKVSVGPSSKKTYSLRSQASTVSANIASKKREGTLQKFGDFLQHSPTILQSKAKKIIETMSSPKLSTVEVSKENVSQPKKAKRKLYRNEISSPINISGQVILMEQKVKETDHQILKRRLRTRTAK</sequence>
<name>KI20B_MOUSE</name>
<protein>
    <recommendedName>
        <fullName evidence="9">Kinesin-like protein KIF20B</fullName>
    </recommendedName>
    <alternativeName>
        <fullName evidence="10">Kinesin family member 20B</fullName>
    </alternativeName>
    <alternativeName>
        <fullName evidence="1">Kinesin-related motor interacting with PIN1</fullName>
    </alternativeName>
    <alternativeName>
        <fullName evidence="1">M-phase phosphoprotein 1</fullName>
        <shortName evidence="1">MPP1</shortName>
    </alternativeName>
</protein>
<feature type="chain" id="PRO_0000274054" description="Kinesin-like protein KIF20B">
    <location>
        <begin position="1"/>
        <end position="1774"/>
    </location>
</feature>
<feature type="domain" description="Kinesin motor" evidence="3">
    <location>
        <begin position="58"/>
        <end position="477"/>
    </location>
</feature>
<feature type="region of interest" description="Disordered" evidence="4">
    <location>
        <begin position="538"/>
        <end position="557"/>
    </location>
</feature>
<feature type="region of interest" description="Disordered" evidence="4">
    <location>
        <begin position="740"/>
        <end position="799"/>
    </location>
</feature>
<feature type="region of interest" description="Necessary and sufficient for interaction with SHTN1" evidence="5">
    <location>
        <begin position="1002"/>
        <end position="1059"/>
    </location>
</feature>
<feature type="region of interest" description="Interaction with PIN1" evidence="1">
    <location>
        <begin position="1514"/>
        <end position="1774"/>
    </location>
</feature>
<feature type="region of interest" description="Disordered" evidence="4">
    <location>
        <begin position="1625"/>
        <end position="1663"/>
    </location>
</feature>
<feature type="coiled-coil region" evidence="2">
    <location>
        <begin position="525"/>
        <end position="601"/>
    </location>
</feature>
<feature type="coiled-coil region" evidence="2">
    <location>
        <begin position="705"/>
        <end position="747"/>
    </location>
</feature>
<feature type="coiled-coil region" evidence="2">
    <location>
        <begin position="824"/>
        <end position="946"/>
    </location>
</feature>
<feature type="coiled-coil region" evidence="2">
    <location>
        <begin position="1021"/>
        <end position="1507"/>
    </location>
</feature>
<feature type="compositionally biased region" description="Acidic residues" evidence="4">
    <location>
        <begin position="538"/>
        <end position="555"/>
    </location>
</feature>
<feature type="compositionally biased region" description="Polar residues" evidence="4">
    <location>
        <begin position="741"/>
        <end position="778"/>
    </location>
</feature>
<feature type="compositionally biased region" description="Basic and acidic residues" evidence="4">
    <location>
        <begin position="779"/>
        <end position="788"/>
    </location>
</feature>
<feature type="compositionally biased region" description="Basic and acidic residues" evidence="4">
    <location>
        <begin position="1638"/>
        <end position="1651"/>
    </location>
</feature>
<feature type="binding site" evidence="3">
    <location>
        <begin position="152"/>
        <end position="159"/>
    </location>
    <ligand>
        <name>ATP</name>
        <dbReference type="ChEBI" id="CHEBI:30616"/>
    </ligand>
</feature>
<feature type="modified residue" description="Phosphoserine" evidence="1">
    <location>
        <position position="486"/>
    </location>
</feature>
<feature type="modified residue" description="Phosphoserine" evidence="12">
    <location>
        <position position="950"/>
    </location>
</feature>
<feature type="modified residue" description="Phosphoserine" evidence="11">
    <location>
        <position position="1107"/>
    </location>
</feature>
<feature type="modified residue" description="Phosphoserine" evidence="1">
    <location>
        <position position="1542"/>
    </location>
</feature>
<feature type="modified residue" description="Phosphothreonine; by CDK1" evidence="1">
    <location>
        <position position="1598"/>
    </location>
</feature>
<feature type="modified residue" description="Phosphoserine" evidence="1">
    <location>
        <position position="1612"/>
    </location>
</feature>
<feature type="modified residue" description="Phosphoserine" evidence="1">
    <location>
        <position position="1669"/>
    </location>
</feature>
<feature type="modified residue" description="Phosphoserine" evidence="13">
    <location>
        <position position="1694"/>
    </location>
</feature>
<feature type="splice variant" id="VSP_022623" description="In isoform 2." evidence="8">
    <location>
        <begin position="1"/>
        <end position="386"/>
    </location>
</feature>
<feature type="splice variant" id="VSP_022624" description="In isoform 4." evidence="9">
    <location>
        <begin position="227"/>
        <end position="237"/>
    </location>
</feature>
<feature type="splice variant" id="VSP_022625" description="In isoform 4." evidence="9">
    <location>
        <position position="375"/>
    </location>
</feature>
<feature type="splice variant" id="VSP_022626" description="In isoform 2 and isoform 3." evidence="7 8">
    <location>
        <begin position="666"/>
        <end position="705"/>
    </location>
</feature>
<feature type="mutagenesis site" description="Reduces interaction with SHTN1; when associated with A-1048." evidence="5">
    <original>Y</original>
    <variation>F</variation>
    <location>
        <position position="1047"/>
    </location>
</feature>
<feature type="mutagenesis site" description="Reduces interaction with SHTN1; when associated with F-1047." evidence="5">
    <original>R</original>
    <variation>A</variation>
    <location>
        <position position="1048"/>
    </location>
</feature>
<feature type="sequence conflict" description="In Ref. 3; BAE43340." evidence="9" ref="3">
    <original>D</original>
    <variation>E</variation>
    <location>
        <position position="675"/>
    </location>
</feature>
<feature type="sequence conflict" description="In Ref. 3; BAE43340." evidence="9" ref="3">
    <original>S</original>
    <variation>P</variation>
    <location>
        <position position="763"/>
    </location>
</feature>
<organism>
    <name type="scientific">Mus musculus</name>
    <name type="common">Mouse</name>
    <dbReference type="NCBI Taxonomy" id="10090"/>
    <lineage>
        <taxon>Eukaryota</taxon>
        <taxon>Metazoa</taxon>
        <taxon>Chordata</taxon>
        <taxon>Craniata</taxon>
        <taxon>Vertebrata</taxon>
        <taxon>Euteleostomi</taxon>
        <taxon>Mammalia</taxon>
        <taxon>Eutheria</taxon>
        <taxon>Euarchontoglires</taxon>
        <taxon>Glires</taxon>
        <taxon>Rodentia</taxon>
        <taxon>Myomorpha</taxon>
        <taxon>Muroidea</taxon>
        <taxon>Muridae</taxon>
        <taxon>Murinae</taxon>
        <taxon>Mus</taxon>
        <taxon>Mus</taxon>
    </lineage>
</organism>
<gene>
    <name evidence="10" type="primary">Kif20b</name>
    <name evidence="1" type="synonym">Mphosph1</name>
</gene>
<proteinExistence type="evidence at protein level"/>
<dbReference type="EMBL" id="AY259532">
    <property type="protein sequence ID" value="AAP14646.1"/>
    <property type="status" value="ALT_FRAME"/>
    <property type="molecule type" value="mRNA"/>
</dbReference>
<dbReference type="EMBL" id="AC113244">
    <property type="status" value="NOT_ANNOTATED_CDS"/>
    <property type="molecule type" value="Genomic_DNA"/>
</dbReference>
<dbReference type="EMBL" id="AK045067">
    <property type="protein sequence ID" value="BAC32207.1"/>
    <property type="molecule type" value="mRNA"/>
</dbReference>
<dbReference type="EMBL" id="AK049225">
    <property type="protein sequence ID" value="BAE43340.1"/>
    <property type="molecule type" value="mRNA"/>
</dbReference>
<dbReference type="EMBL" id="AB054030">
    <property type="protein sequence ID" value="BAB32494.1"/>
    <property type="molecule type" value="Genomic_DNA"/>
</dbReference>
<dbReference type="EMBL" id="BC048954">
    <property type="protein sequence ID" value="AAH48954.1"/>
    <property type="status" value="ALT_FRAME"/>
    <property type="molecule type" value="mRNA"/>
</dbReference>
<dbReference type="CCDS" id="CCDS37967.1">
    <molecule id="Q80WE4-1"/>
</dbReference>
<dbReference type="CCDS" id="CCDS89382.1">
    <molecule id="Q80WE4-3"/>
</dbReference>
<dbReference type="RefSeq" id="NP_001349363.1">
    <molecule id="Q80WE4-3"/>
    <property type="nucleotide sequence ID" value="NM_001362434.1"/>
</dbReference>
<dbReference type="RefSeq" id="NP_898867.1">
    <molecule id="Q80WE4-1"/>
    <property type="nucleotide sequence ID" value="NM_183046.2"/>
</dbReference>
<dbReference type="RefSeq" id="XP_006527143.1">
    <molecule id="Q80WE4-1"/>
    <property type="nucleotide sequence ID" value="XM_006527080.3"/>
</dbReference>
<dbReference type="RefSeq" id="XP_006527144.1">
    <molecule id="Q80WE4-1"/>
    <property type="nucleotide sequence ID" value="XM_006527081.4"/>
</dbReference>
<dbReference type="RefSeq" id="XP_006527149.1">
    <property type="nucleotide sequence ID" value="XM_006527086.2"/>
</dbReference>
<dbReference type="RefSeq" id="XP_030106799.1">
    <molecule id="Q80WE4-2"/>
    <property type="nucleotide sequence ID" value="XM_030250939.2"/>
</dbReference>
<dbReference type="SMR" id="Q80WE4"/>
<dbReference type="BioGRID" id="232217">
    <property type="interactions" value="32"/>
</dbReference>
<dbReference type="FunCoup" id="Q80WE4">
    <property type="interactions" value="1713"/>
</dbReference>
<dbReference type="IntAct" id="Q80WE4">
    <property type="interactions" value="14"/>
</dbReference>
<dbReference type="STRING" id="10090.ENSMUSP00000084599"/>
<dbReference type="GlyGen" id="Q80WE4">
    <property type="glycosylation" value="1 site"/>
</dbReference>
<dbReference type="iPTMnet" id="Q80WE4"/>
<dbReference type="PhosphoSitePlus" id="Q80WE4"/>
<dbReference type="jPOST" id="Q80WE4"/>
<dbReference type="PaxDb" id="10090-ENSMUSP00000084599"/>
<dbReference type="PeptideAtlas" id="Q80WE4"/>
<dbReference type="ProteomicsDB" id="263438">
    <molecule id="Q80WE4-1"/>
</dbReference>
<dbReference type="ProteomicsDB" id="263439">
    <molecule id="Q80WE4-2"/>
</dbReference>
<dbReference type="ProteomicsDB" id="263440">
    <molecule id="Q80WE4-3"/>
</dbReference>
<dbReference type="ProteomicsDB" id="263441">
    <molecule id="Q80WE4-4"/>
</dbReference>
<dbReference type="Pumba" id="Q80WE4"/>
<dbReference type="Antibodypedia" id="30294">
    <property type="antibodies" value="90 antibodies from 21 providers"/>
</dbReference>
<dbReference type="DNASU" id="240641"/>
<dbReference type="Ensembl" id="ENSMUST00000087341.7">
    <molecule id="Q80WE4-1"/>
    <property type="protein sequence ID" value="ENSMUSP00000084599.6"/>
    <property type="gene ID" value="ENSMUSG00000024795.12"/>
</dbReference>
<dbReference type="Ensembl" id="ENSMUST00000223907.2">
    <molecule id="Q80WE4-3"/>
    <property type="protein sequence ID" value="ENSMUSP00000153034.2"/>
    <property type="gene ID" value="ENSMUSG00000024795.12"/>
</dbReference>
<dbReference type="GeneID" id="240641"/>
<dbReference type="KEGG" id="mmu:240641"/>
<dbReference type="UCSC" id="uc008hgz.1">
    <molecule id="Q80WE4-1"/>
    <property type="organism name" value="mouse"/>
</dbReference>
<dbReference type="UCSC" id="uc008hha.1">
    <molecule id="Q80WE4-2"/>
    <property type="organism name" value="mouse"/>
</dbReference>
<dbReference type="AGR" id="MGI:2444576"/>
<dbReference type="CTD" id="9585"/>
<dbReference type="MGI" id="MGI:2444576">
    <property type="gene designation" value="Kif20b"/>
</dbReference>
<dbReference type="VEuPathDB" id="HostDB:ENSMUSG00000024795"/>
<dbReference type="eggNOG" id="KOG0247">
    <property type="taxonomic scope" value="Eukaryota"/>
</dbReference>
<dbReference type="GeneTree" id="ENSGT00940000155989"/>
<dbReference type="HOGENOM" id="CLU_002380_0_0_1"/>
<dbReference type="InParanoid" id="Q80WE4"/>
<dbReference type="OMA" id="WSLKATY"/>
<dbReference type="OrthoDB" id="123929at2759"/>
<dbReference type="PhylomeDB" id="Q80WE4"/>
<dbReference type="TreeFam" id="TF105232"/>
<dbReference type="Reactome" id="R-MMU-2132295">
    <property type="pathway name" value="MHC class II antigen presentation"/>
</dbReference>
<dbReference type="Reactome" id="R-MMU-6811434">
    <property type="pathway name" value="COPI-dependent Golgi-to-ER retrograde traffic"/>
</dbReference>
<dbReference type="Reactome" id="R-MMU-983189">
    <property type="pathway name" value="Kinesins"/>
</dbReference>
<dbReference type="BioGRID-ORCS" id="240641">
    <property type="hits" value="4 hits in 80 CRISPR screens"/>
</dbReference>
<dbReference type="ChiTaRS" id="Kif20b">
    <property type="organism name" value="mouse"/>
</dbReference>
<dbReference type="PRO" id="PR:Q80WE4"/>
<dbReference type="Proteomes" id="UP000000589">
    <property type="component" value="Chromosome 19"/>
</dbReference>
<dbReference type="RNAct" id="Q80WE4">
    <property type="molecule type" value="protein"/>
</dbReference>
<dbReference type="Bgee" id="ENSMUSG00000024795">
    <property type="expression patterns" value="Expressed in undifferentiated genital tubercle and 150 other cell types or tissues"/>
</dbReference>
<dbReference type="ExpressionAtlas" id="Q80WE4">
    <property type="expression patterns" value="baseline and differential"/>
</dbReference>
<dbReference type="GO" id="GO:0005813">
    <property type="term" value="C:centrosome"/>
    <property type="evidence" value="ECO:0000250"/>
    <property type="project" value="UniProtKB"/>
</dbReference>
<dbReference type="GO" id="GO:0036064">
    <property type="term" value="C:ciliary basal body"/>
    <property type="evidence" value="ECO:0007669"/>
    <property type="project" value="Ensembl"/>
</dbReference>
<dbReference type="GO" id="GO:0070938">
    <property type="term" value="C:contractile ring"/>
    <property type="evidence" value="ECO:0000250"/>
    <property type="project" value="UniProtKB"/>
</dbReference>
<dbReference type="GO" id="GO:0005829">
    <property type="term" value="C:cytosol"/>
    <property type="evidence" value="ECO:0007669"/>
    <property type="project" value="Ensembl"/>
</dbReference>
<dbReference type="GO" id="GO:0030426">
    <property type="term" value="C:growth cone"/>
    <property type="evidence" value="ECO:0007669"/>
    <property type="project" value="UniProtKB-SubCell"/>
</dbReference>
<dbReference type="GO" id="GO:0045171">
    <property type="term" value="C:intercellular bridge"/>
    <property type="evidence" value="ECO:0007669"/>
    <property type="project" value="Ensembl"/>
</dbReference>
<dbReference type="GO" id="GO:0005874">
    <property type="term" value="C:microtubule"/>
    <property type="evidence" value="ECO:0007669"/>
    <property type="project" value="UniProtKB-KW"/>
</dbReference>
<dbReference type="GO" id="GO:0015630">
    <property type="term" value="C:microtubule cytoskeleton"/>
    <property type="evidence" value="ECO:0000314"/>
    <property type="project" value="UniProtKB"/>
</dbReference>
<dbReference type="GO" id="GO:0030496">
    <property type="term" value="C:midbody"/>
    <property type="evidence" value="ECO:0000314"/>
    <property type="project" value="UniProtKB"/>
</dbReference>
<dbReference type="GO" id="GO:1990023">
    <property type="term" value="C:mitotic spindle midzone"/>
    <property type="evidence" value="ECO:0000250"/>
    <property type="project" value="UniProtKB"/>
</dbReference>
<dbReference type="GO" id="GO:0097431">
    <property type="term" value="C:mitotic spindle pole"/>
    <property type="evidence" value="ECO:0000250"/>
    <property type="project" value="UniProtKB"/>
</dbReference>
<dbReference type="GO" id="GO:0005730">
    <property type="term" value="C:nucleolus"/>
    <property type="evidence" value="ECO:0000250"/>
    <property type="project" value="UniProtKB"/>
</dbReference>
<dbReference type="GO" id="GO:0005654">
    <property type="term" value="C:nucleoplasm"/>
    <property type="evidence" value="ECO:0000250"/>
    <property type="project" value="UniProtKB"/>
</dbReference>
<dbReference type="GO" id="GO:0005634">
    <property type="term" value="C:nucleus"/>
    <property type="evidence" value="ECO:0000314"/>
    <property type="project" value="UniProtKB"/>
</dbReference>
<dbReference type="GO" id="GO:0048471">
    <property type="term" value="C:perinuclear region of cytoplasm"/>
    <property type="evidence" value="ECO:0000314"/>
    <property type="project" value="UniProtKB"/>
</dbReference>
<dbReference type="GO" id="GO:0051233">
    <property type="term" value="C:spindle midzone"/>
    <property type="evidence" value="ECO:0000314"/>
    <property type="project" value="UniProtKB"/>
</dbReference>
<dbReference type="GO" id="GO:0005524">
    <property type="term" value="F:ATP binding"/>
    <property type="evidence" value="ECO:0007669"/>
    <property type="project" value="UniProtKB-KW"/>
</dbReference>
<dbReference type="GO" id="GO:0016887">
    <property type="term" value="F:ATP hydrolysis activity"/>
    <property type="evidence" value="ECO:0000250"/>
    <property type="project" value="UniProtKB"/>
</dbReference>
<dbReference type="GO" id="GO:0008017">
    <property type="term" value="F:microtubule binding"/>
    <property type="evidence" value="ECO:0000250"/>
    <property type="project" value="UniProtKB"/>
</dbReference>
<dbReference type="GO" id="GO:0008574">
    <property type="term" value="F:plus-end-directed microtubule motor activity"/>
    <property type="evidence" value="ECO:0000250"/>
    <property type="project" value="UniProtKB"/>
</dbReference>
<dbReference type="GO" id="GO:0042803">
    <property type="term" value="F:protein homodimerization activity"/>
    <property type="evidence" value="ECO:0000250"/>
    <property type="project" value="UniProtKB"/>
</dbReference>
<dbReference type="GO" id="GO:0050699">
    <property type="term" value="F:WW domain binding"/>
    <property type="evidence" value="ECO:0007669"/>
    <property type="project" value="Ensembl"/>
</dbReference>
<dbReference type="GO" id="GO:0051301">
    <property type="term" value="P:cell division"/>
    <property type="evidence" value="ECO:0007669"/>
    <property type="project" value="UniProtKB-KW"/>
</dbReference>
<dbReference type="GO" id="GO:0007018">
    <property type="term" value="P:microtubule-based movement"/>
    <property type="evidence" value="ECO:0007669"/>
    <property type="project" value="InterPro"/>
</dbReference>
<dbReference type="GO" id="GO:0001843">
    <property type="term" value="P:neural tube closure"/>
    <property type="evidence" value="ECO:0000315"/>
    <property type="project" value="MGI"/>
</dbReference>
<dbReference type="GO" id="GO:0048812">
    <property type="term" value="P:neuron projection morphogenesis"/>
    <property type="evidence" value="ECO:0000315"/>
    <property type="project" value="UniProtKB"/>
</dbReference>
<dbReference type="GO" id="GO:0008284">
    <property type="term" value="P:positive regulation of cell population proliferation"/>
    <property type="evidence" value="ECO:0000315"/>
    <property type="project" value="UniProtKB"/>
</dbReference>
<dbReference type="GO" id="GO:0032467">
    <property type="term" value="P:positive regulation of cytokinesis"/>
    <property type="evidence" value="ECO:0000250"/>
    <property type="project" value="UniProtKB"/>
</dbReference>
<dbReference type="GO" id="GO:0090316">
    <property type="term" value="P:positive regulation of intracellular protein transport"/>
    <property type="evidence" value="ECO:0000315"/>
    <property type="project" value="UniProtKB"/>
</dbReference>
<dbReference type="GO" id="GO:1903438">
    <property type="term" value="P:positive regulation of mitotic cytokinetic process"/>
    <property type="evidence" value="ECO:0000315"/>
    <property type="project" value="UniProtKB"/>
</dbReference>
<dbReference type="GO" id="GO:2001224">
    <property type="term" value="P:positive regulation of neuron migration"/>
    <property type="evidence" value="ECO:0000315"/>
    <property type="project" value="UniProtKB"/>
</dbReference>
<dbReference type="GO" id="GO:0035372">
    <property type="term" value="P:protein localization to microtubule"/>
    <property type="evidence" value="ECO:0000315"/>
    <property type="project" value="UniProtKB"/>
</dbReference>
<dbReference type="GO" id="GO:2000114">
    <property type="term" value="P:regulation of establishment of cell polarity"/>
    <property type="evidence" value="ECO:0000315"/>
    <property type="project" value="UniProtKB"/>
</dbReference>
<dbReference type="GO" id="GO:0070201">
    <property type="term" value="P:regulation of establishment of protein localization"/>
    <property type="evidence" value="ECO:0000314"/>
    <property type="project" value="MGI"/>
</dbReference>
<dbReference type="GO" id="GO:2001222">
    <property type="term" value="P:regulation of neuron migration"/>
    <property type="evidence" value="ECO:0000316"/>
    <property type="project" value="MGI"/>
</dbReference>
<dbReference type="CDD" id="cd01368">
    <property type="entry name" value="KISc_KIF23_like"/>
    <property type="match status" value="1"/>
</dbReference>
<dbReference type="CDD" id="cd21786">
    <property type="entry name" value="RBD_KIF20B"/>
    <property type="match status" value="1"/>
</dbReference>
<dbReference type="Gene3D" id="3.40.850.10">
    <property type="entry name" value="Kinesin motor domain"/>
    <property type="match status" value="1"/>
</dbReference>
<dbReference type="InterPro" id="IPR047149">
    <property type="entry name" value="KIF11-like"/>
</dbReference>
<dbReference type="InterPro" id="IPR019821">
    <property type="entry name" value="Kinesin_motor_CS"/>
</dbReference>
<dbReference type="InterPro" id="IPR001752">
    <property type="entry name" value="Kinesin_motor_dom"/>
</dbReference>
<dbReference type="InterPro" id="IPR036961">
    <property type="entry name" value="Kinesin_motor_dom_sf"/>
</dbReference>
<dbReference type="InterPro" id="IPR027417">
    <property type="entry name" value="P-loop_NTPase"/>
</dbReference>
<dbReference type="PANTHER" id="PTHR47970:SF29">
    <property type="entry name" value="KINESIN FAMILY MEMBER 20B"/>
    <property type="match status" value="1"/>
</dbReference>
<dbReference type="PANTHER" id="PTHR47970">
    <property type="entry name" value="KINESIN-LIKE PROTEIN KIF11"/>
    <property type="match status" value="1"/>
</dbReference>
<dbReference type="Pfam" id="PF00225">
    <property type="entry name" value="Kinesin"/>
    <property type="match status" value="1"/>
</dbReference>
<dbReference type="PRINTS" id="PR00380">
    <property type="entry name" value="KINESINHEAVY"/>
</dbReference>
<dbReference type="SMART" id="SM00129">
    <property type="entry name" value="KISc"/>
    <property type="match status" value="1"/>
</dbReference>
<dbReference type="SUPFAM" id="SSF52540">
    <property type="entry name" value="P-loop containing nucleoside triphosphate hydrolases"/>
    <property type="match status" value="1"/>
</dbReference>
<dbReference type="PROSITE" id="PS00411">
    <property type="entry name" value="KINESIN_MOTOR_1"/>
    <property type="match status" value="1"/>
</dbReference>
<dbReference type="PROSITE" id="PS50067">
    <property type="entry name" value="KINESIN_MOTOR_2"/>
    <property type="match status" value="1"/>
</dbReference>
<reference key="1">
    <citation type="submission" date="2003-03" db="EMBL/GenBank/DDBJ databases">
        <title>Cloning and characterization of a novel mouse M-phase phosphoprotein gene.</title>
        <authorList>
            <person name="Shan Y.X."/>
            <person name="Yu L."/>
        </authorList>
    </citation>
    <scope>NUCLEOTIDE SEQUENCE [MRNA] (ISOFORM 2)</scope>
</reference>
<reference key="2">
    <citation type="journal article" date="2009" name="PLoS Biol.">
        <title>Lineage-specific biology revealed by a finished genome assembly of the mouse.</title>
        <authorList>
            <person name="Church D.M."/>
            <person name="Goodstadt L."/>
            <person name="Hillier L.W."/>
            <person name="Zody M.C."/>
            <person name="Goldstein S."/>
            <person name="She X."/>
            <person name="Bult C.J."/>
            <person name="Agarwala R."/>
            <person name="Cherry J.L."/>
            <person name="DiCuccio M."/>
            <person name="Hlavina W."/>
            <person name="Kapustin Y."/>
            <person name="Meric P."/>
            <person name="Maglott D."/>
            <person name="Birtle Z."/>
            <person name="Marques A.C."/>
            <person name="Graves T."/>
            <person name="Zhou S."/>
            <person name="Teague B."/>
            <person name="Potamousis K."/>
            <person name="Churas C."/>
            <person name="Place M."/>
            <person name="Herschleb J."/>
            <person name="Runnheim R."/>
            <person name="Forrest D."/>
            <person name="Amos-Landgraf J."/>
            <person name="Schwartz D.C."/>
            <person name="Cheng Z."/>
            <person name="Lindblad-Toh K."/>
            <person name="Eichler E.E."/>
            <person name="Ponting C.P."/>
        </authorList>
    </citation>
    <scope>NUCLEOTIDE SEQUENCE [LARGE SCALE GENOMIC DNA]</scope>
    <source>
        <strain>C57BL/6J</strain>
    </source>
</reference>
<reference key="3">
    <citation type="journal article" date="2005" name="Science">
        <title>The transcriptional landscape of the mammalian genome.</title>
        <authorList>
            <person name="Carninci P."/>
            <person name="Kasukawa T."/>
            <person name="Katayama S."/>
            <person name="Gough J."/>
            <person name="Frith M.C."/>
            <person name="Maeda N."/>
            <person name="Oyama R."/>
            <person name="Ravasi T."/>
            <person name="Lenhard B."/>
            <person name="Wells C."/>
            <person name="Kodzius R."/>
            <person name="Shimokawa K."/>
            <person name="Bajic V.B."/>
            <person name="Brenner S.E."/>
            <person name="Batalov S."/>
            <person name="Forrest A.R."/>
            <person name="Zavolan M."/>
            <person name="Davis M.J."/>
            <person name="Wilming L.G."/>
            <person name="Aidinis V."/>
            <person name="Allen J.E."/>
            <person name="Ambesi-Impiombato A."/>
            <person name="Apweiler R."/>
            <person name="Aturaliya R.N."/>
            <person name="Bailey T.L."/>
            <person name="Bansal M."/>
            <person name="Baxter L."/>
            <person name="Beisel K.W."/>
            <person name="Bersano T."/>
            <person name="Bono H."/>
            <person name="Chalk A.M."/>
            <person name="Chiu K.P."/>
            <person name="Choudhary V."/>
            <person name="Christoffels A."/>
            <person name="Clutterbuck D.R."/>
            <person name="Crowe M.L."/>
            <person name="Dalla E."/>
            <person name="Dalrymple B.P."/>
            <person name="de Bono B."/>
            <person name="Della Gatta G."/>
            <person name="di Bernardo D."/>
            <person name="Down T."/>
            <person name="Engstrom P."/>
            <person name="Fagiolini M."/>
            <person name="Faulkner G."/>
            <person name="Fletcher C.F."/>
            <person name="Fukushima T."/>
            <person name="Furuno M."/>
            <person name="Futaki S."/>
            <person name="Gariboldi M."/>
            <person name="Georgii-Hemming P."/>
            <person name="Gingeras T.R."/>
            <person name="Gojobori T."/>
            <person name="Green R.E."/>
            <person name="Gustincich S."/>
            <person name="Harbers M."/>
            <person name="Hayashi Y."/>
            <person name="Hensch T.K."/>
            <person name="Hirokawa N."/>
            <person name="Hill D."/>
            <person name="Huminiecki L."/>
            <person name="Iacono M."/>
            <person name="Ikeo K."/>
            <person name="Iwama A."/>
            <person name="Ishikawa T."/>
            <person name="Jakt M."/>
            <person name="Kanapin A."/>
            <person name="Katoh M."/>
            <person name="Kawasawa Y."/>
            <person name="Kelso J."/>
            <person name="Kitamura H."/>
            <person name="Kitano H."/>
            <person name="Kollias G."/>
            <person name="Krishnan S.P."/>
            <person name="Kruger A."/>
            <person name="Kummerfeld S.K."/>
            <person name="Kurochkin I.V."/>
            <person name="Lareau L.F."/>
            <person name="Lazarevic D."/>
            <person name="Lipovich L."/>
            <person name="Liu J."/>
            <person name="Liuni S."/>
            <person name="McWilliam S."/>
            <person name="Madan Babu M."/>
            <person name="Madera M."/>
            <person name="Marchionni L."/>
            <person name="Matsuda H."/>
            <person name="Matsuzawa S."/>
            <person name="Miki H."/>
            <person name="Mignone F."/>
            <person name="Miyake S."/>
            <person name="Morris K."/>
            <person name="Mottagui-Tabar S."/>
            <person name="Mulder N."/>
            <person name="Nakano N."/>
            <person name="Nakauchi H."/>
            <person name="Ng P."/>
            <person name="Nilsson R."/>
            <person name="Nishiguchi S."/>
            <person name="Nishikawa S."/>
            <person name="Nori F."/>
            <person name="Ohara O."/>
            <person name="Okazaki Y."/>
            <person name="Orlando V."/>
            <person name="Pang K.C."/>
            <person name="Pavan W.J."/>
            <person name="Pavesi G."/>
            <person name="Pesole G."/>
            <person name="Petrovsky N."/>
            <person name="Piazza S."/>
            <person name="Reed J."/>
            <person name="Reid J.F."/>
            <person name="Ring B.Z."/>
            <person name="Ringwald M."/>
            <person name="Rost B."/>
            <person name="Ruan Y."/>
            <person name="Salzberg S.L."/>
            <person name="Sandelin A."/>
            <person name="Schneider C."/>
            <person name="Schoenbach C."/>
            <person name="Sekiguchi K."/>
            <person name="Semple C.A."/>
            <person name="Seno S."/>
            <person name="Sessa L."/>
            <person name="Sheng Y."/>
            <person name="Shibata Y."/>
            <person name="Shimada H."/>
            <person name="Shimada K."/>
            <person name="Silva D."/>
            <person name="Sinclair B."/>
            <person name="Sperling S."/>
            <person name="Stupka E."/>
            <person name="Sugiura K."/>
            <person name="Sultana R."/>
            <person name="Takenaka Y."/>
            <person name="Taki K."/>
            <person name="Tammoja K."/>
            <person name="Tan S.L."/>
            <person name="Tang S."/>
            <person name="Taylor M.S."/>
            <person name="Tegner J."/>
            <person name="Teichmann S.A."/>
            <person name="Ueda H.R."/>
            <person name="van Nimwegen E."/>
            <person name="Verardo R."/>
            <person name="Wei C.L."/>
            <person name="Yagi K."/>
            <person name="Yamanishi H."/>
            <person name="Zabarovsky E."/>
            <person name="Zhu S."/>
            <person name="Zimmer A."/>
            <person name="Hide W."/>
            <person name="Bult C."/>
            <person name="Grimmond S.M."/>
            <person name="Teasdale R.D."/>
            <person name="Liu E.T."/>
            <person name="Brusic V."/>
            <person name="Quackenbush J."/>
            <person name="Wahlestedt C."/>
            <person name="Mattick J.S."/>
            <person name="Hume D.A."/>
            <person name="Kai C."/>
            <person name="Sasaki D."/>
            <person name="Tomaru Y."/>
            <person name="Fukuda S."/>
            <person name="Kanamori-Katayama M."/>
            <person name="Suzuki M."/>
            <person name="Aoki J."/>
            <person name="Arakawa T."/>
            <person name="Iida J."/>
            <person name="Imamura K."/>
            <person name="Itoh M."/>
            <person name="Kato T."/>
            <person name="Kawaji H."/>
            <person name="Kawagashira N."/>
            <person name="Kawashima T."/>
            <person name="Kojima M."/>
            <person name="Kondo S."/>
            <person name="Konno H."/>
            <person name="Nakano K."/>
            <person name="Ninomiya N."/>
            <person name="Nishio T."/>
            <person name="Okada M."/>
            <person name="Plessy C."/>
            <person name="Shibata K."/>
            <person name="Shiraki T."/>
            <person name="Suzuki S."/>
            <person name="Tagami M."/>
            <person name="Waki K."/>
            <person name="Watahiki A."/>
            <person name="Okamura-Oho Y."/>
            <person name="Suzuki H."/>
            <person name="Kawai J."/>
            <person name="Hayashizaki Y."/>
        </authorList>
    </citation>
    <scope>NUCLEOTIDE SEQUENCE [LARGE SCALE MRNA] OF 1-781 (ISOFORM 1)</scope>
    <scope>NUCLEOTIDE SEQUENCE [LARGE SCALE MRNA] OF 1-732 (ISOFORM 3)</scope>
    <source>
        <strain>C57BL/6J</strain>
        <tissue>Embryo</tissue>
    </source>
</reference>
<reference key="4">
    <citation type="journal article" date="2001" name="Proc. Natl. Acad. Sci. U.S.A.">
        <title>All kinesin superfamily protein, KIF, genes in mouse and human.</title>
        <authorList>
            <person name="Miki H."/>
            <person name="Setou M."/>
            <person name="Kaneshiro K."/>
        </authorList>
    </citation>
    <scope>NUCLEOTIDE SEQUENCE [GENOMIC DNA] OF 148-384 (ISOFORM 4)</scope>
</reference>
<reference key="5">
    <citation type="journal article" date="2004" name="Genome Res.">
        <title>The status, quality, and expansion of the NIH full-length cDNA project: the Mammalian Gene Collection (MGC).</title>
        <authorList>
            <consortium name="The MGC Project Team"/>
        </authorList>
    </citation>
    <scope>NUCLEOTIDE SEQUENCE [LARGE SCALE MRNA] OF 1232-1774</scope>
    <source>
        <strain>FVB/N-3</strain>
        <tissue>Mammary tumor</tissue>
    </source>
</reference>
<reference key="6">
    <citation type="journal article" date="2007" name="Science">
        <title>ATM and ATR substrate analysis reveals extensive protein networks responsive to DNA damage.</title>
        <authorList>
            <person name="Matsuoka S."/>
            <person name="Ballif B.A."/>
            <person name="Smogorzewska A."/>
            <person name="McDonald E.R. III"/>
            <person name="Hurov K.E."/>
            <person name="Luo J."/>
            <person name="Bakalarski C.E."/>
            <person name="Zhao Z."/>
            <person name="Solimini N."/>
            <person name="Lerenthal Y."/>
            <person name="Shiloh Y."/>
            <person name="Gygi S.P."/>
            <person name="Elledge S.J."/>
        </authorList>
    </citation>
    <scope>PHOSPHORYLATION [LARGE SCALE ANALYSIS] AT SER-1107</scope>
    <scope>IDENTIFICATION BY MASS SPECTROMETRY [LARGE SCALE ANALYSIS]</scope>
    <source>
        <tissue>Embryonic fibroblast</tissue>
    </source>
</reference>
<reference key="7">
    <citation type="journal article" date="2009" name="Immunity">
        <title>The phagosomal proteome in interferon-gamma-activated macrophages.</title>
        <authorList>
            <person name="Trost M."/>
            <person name="English L."/>
            <person name="Lemieux S."/>
            <person name="Courcelles M."/>
            <person name="Desjardins M."/>
            <person name="Thibault P."/>
        </authorList>
    </citation>
    <scope>PHOSPHORYLATION [LARGE SCALE ANALYSIS] AT SER-950</scope>
    <scope>IDENTIFICATION BY MASS SPECTROMETRY [LARGE SCALE ANALYSIS]</scope>
</reference>
<reference key="8">
    <citation type="journal article" date="2010" name="Cell">
        <title>A tissue-specific atlas of mouse protein phosphorylation and expression.</title>
        <authorList>
            <person name="Huttlin E.L."/>
            <person name="Jedrychowski M.P."/>
            <person name="Elias J.E."/>
            <person name="Goswami T."/>
            <person name="Rad R."/>
            <person name="Beausoleil S.A."/>
            <person name="Villen J."/>
            <person name="Haas W."/>
            <person name="Sowa M.E."/>
            <person name="Gygi S.P."/>
        </authorList>
    </citation>
    <scope>PHOSPHORYLATION [LARGE SCALE ANALYSIS] AT SER-1694</scope>
    <scope>IDENTIFICATION BY MASS SPECTROMETRY [LARGE SCALE ANALYSIS]</scope>
    <source>
        <tissue>Spleen</tissue>
    </source>
</reference>
<reference key="9">
    <citation type="journal article" date="2013" name="Development">
        <title>The vertebrate-specific Kinesin-6, Kif20b, is required for normal cytokinesis of polarized cortical stem cells and cerebral cortex size.</title>
        <authorList>
            <person name="Janisch K.M."/>
            <person name="Vock V.M."/>
            <person name="Fleming M.S."/>
            <person name="Shrestha A."/>
            <person name="Grimsley-Myers C.M."/>
            <person name="Rasoul B.A."/>
            <person name="Neale S.A."/>
            <person name="Cupp T.D."/>
            <person name="Kinchen J.M."/>
            <person name="Liem K.F. Jr."/>
            <person name="Dwyer N.D."/>
        </authorList>
    </citation>
    <scope>FUNCTION</scope>
    <scope>SUBCELLULAR LOCATION</scope>
    <scope>TISSUE SPECIFICITY</scope>
    <scope>DEVELOPMENTAL STAGE</scope>
</reference>
<reference key="10">
    <citation type="journal article" date="2013" name="J. Neurosci.">
        <title>Shootin1 acts in concert with KIF20B to promote polarization of migrating neurons.</title>
        <authorList>
            <person name="Sapir T."/>
            <person name="Levy T."/>
            <person name="Sakakibara A."/>
            <person name="Rabinkov A."/>
            <person name="Miyata T."/>
            <person name="Reiner O."/>
        </authorList>
    </citation>
    <scope>FUNCTION</scope>
    <scope>INTERACTION WITH SHTN1</scope>
    <scope>SUBCELLULAR LOCATION</scope>
    <scope>DEVELOPMENTAL STAGE</scope>
    <scope>MUTAGENESIS OF TYR-1047 AND ARG-1048</scope>
</reference>
<accession>Q80WE4</accession>
<accession>E9QPW5</accession>
<accession>Q3V347</accession>
<accession>Q80VC0</accession>
<accession>Q8BLI2</accession>
<accession>Q99PT5</accession>
<evidence type="ECO:0000250" key="1">
    <source>
        <dbReference type="UniProtKB" id="Q96Q89"/>
    </source>
</evidence>
<evidence type="ECO:0000255" key="2"/>
<evidence type="ECO:0000255" key="3">
    <source>
        <dbReference type="PROSITE-ProRule" id="PRU00283"/>
    </source>
</evidence>
<evidence type="ECO:0000256" key="4">
    <source>
        <dbReference type="SAM" id="MobiDB-lite"/>
    </source>
</evidence>
<evidence type="ECO:0000269" key="5">
    <source>
    </source>
</evidence>
<evidence type="ECO:0000269" key="6">
    <source>
    </source>
</evidence>
<evidence type="ECO:0000303" key="7">
    <source>
    </source>
</evidence>
<evidence type="ECO:0000303" key="8">
    <source ref="1"/>
</evidence>
<evidence type="ECO:0000305" key="9"/>
<evidence type="ECO:0000312" key="10">
    <source>
        <dbReference type="MGI" id="MGI:2444576"/>
    </source>
</evidence>
<evidence type="ECO:0007744" key="11">
    <source>
    </source>
</evidence>
<evidence type="ECO:0007744" key="12">
    <source>
    </source>
</evidence>
<evidence type="ECO:0007744" key="13">
    <source>
    </source>
</evidence>
<comment type="function">
    <text evidence="1 5 6">Plus-end-directed motor enzyme that is required for completion of cytokinesis (By similarity). Required for proper midbody organization and abscission in polarized cortical stem cells (PubMed:24173802). Plays a role in the regulation of neuronal polarization by mediating the transport of specific cargos. Participates in the mobilization of SHTN1 and in the accumulation of PIP3 in the growth cone of primary hippocampal neurons in a tubulin and actin-dependent manner (PubMed:23864681). In the developing telencephalon, cooperates with SHTN1 to promote both the transition from the multipolar to the bipolar stage and the radial migration of cortical neurons from the ventricular zone toward the superficial layer of the neocortex (PubMed:23864681). Involved in cerebral cortex growth (PubMed:24173802). Acts as an oncogene for promoting bladder cancer cells proliferation, apoptosis inhibition and carcinogenic progression (By similarity).</text>
</comment>
<comment type="subunit">
    <text evidence="1 5">Oligomerizes (via kinesin motor domain). Associates with microtubules. Interacts (via C-terminal globular tail region) with PIN1 (via WW domain). Interacts with PRC1 (By similarity). Interacts with SHTN1 (via N-terminus); the interaction is direct and promotes the association of SHTN1 to microtubules in primary neurons (PubMed:23864681). Associates with microtubules (PubMed:23864681).</text>
</comment>
<comment type="subcellular location">
    <subcellularLocation>
        <location evidence="6">Nucleus</location>
    </subcellularLocation>
    <subcellularLocation>
        <location evidence="5">Cytoplasm</location>
        <location evidence="5">Cytoskeleton</location>
    </subcellularLocation>
    <subcellularLocation>
        <location evidence="1">Cytoplasm</location>
        <location evidence="1">Cytoskeleton</location>
        <location evidence="1">Microtubule organizing center</location>
        <location evidence="1">Centrosome</location>
    </subcellularLocation>
    <subcellularLocation>
        <location evidence="1">Nucleus</location>
        <location evidence="1">Nucleolus</location>
    </subcellularLocation>
    <subcellularLocation>
        <location evidence="1">Nucleus</location>
        <location evidence="1">Nucleoplasm</location>
    </subcellularLocation>
    <subcellularLocation>
        <location evidence="6">Cytoplasm</location>
        <location evidence="6">Cytoskeleton</location>
        <location evidence="6">Spindle</location>
    </subcellularLocation>
    <subcellularLocation>
        <location evidence="1">Cytoplasm</location>
        <location evidence="1">Cytoskeleton</location>
        <location evidence="1">Spindle pole</location>
    </subcellularLocation>
    <subcellularLocation>
        <location evidence="5 6">Midbody</location>
    </subcellularLocation>
    <subcellularLocation>
        <location evidence="5">Cell projection</location>
        <location evidence="5">Axon</location>
    </subcellularLocation>
    <subcellularLocation>
        <location evidence="5">Cell projection</location>
        <location evidence="5">Growth cone</location>
    </subcellularLocation>
    <text evidence="1 5 6">Localizes mainly in the nucleus during interphase although it is also detected in the cytoplasm without clear association with microtubules (By similarity). Localized to the central spindle during cytokinetic furrowing and with the midbody during abscission (PubMed:24173802). A 2-3 fold expression increase is seen as cells progress from G1 to G2/M phase. During prophase and metaphase it is found throughout the cytoplasm and at anaphase accumulates at the midplan of the cell and forms a distinct band extending across the spindle midzone. At anaphase it is concentrated in the midbody (By similarity). Colocalized partially along microtubules in primary neurons (PubMed:23864681). Colocalized with SHTN1 along microtubules to the tip of the growing cone in primary hippocampal neurons (PubMed:23864681). Localized in midbodies between dividing radial progenitors in the ventricular zone (PubMed:23864681). Colocalized with PRC1 in the nucleus of bladder carcinoma cells at the interphase. Colocalized with PRC1 in bladder carcinoma cells at prophase, metaphase, early anaphase, at the midzone in late anaphase and at the contractile ring in telophase (By similarity).</text>
</comment>
<comment type="alternative products">
    <event type="alternative splicing"/>
    <isoform>
        <id>Q80WE4-1</id>
        <name>1</name>
        <sequence type="displayed"/>
    </isoform>
    <isoform>
        <id>Q80WE4-2</id>
        <name>2</name>
        <sequence type="described" ref="VSP_022623 VSP_022626"/>
    </isoform>
    <isoform>
        <id>Q80WE4-3</id>
        <name>3</name>
        <sequence type="described" ref="VSP_022626"/>
    </isoform>
    <isoform>
        <id>Q80WE4-4</id>
        <name>4</name>
        <sequence type="described" ref="VSP_022624 VSP_022625"/>
    </isoform>
</comment>
<comment type="tissue specificity">
    <text evidence="6">Expressed in the brain (at protein level) (PubMed:24173802).</text>
</comment>
<comment type="developmental stage">
    <text evidence="5 6">Expressed in the developing brain (PubMed:23864681). Expressed in the apical aspect of the ventricular zone, in the marginal zone, in a narrow stripe between the intermediate zone and the cortical plate at 14.5 dpc (PubMed:23864681). Expressed in multipolar cells at 14 dpc (at protein level) (PubMed:23864681). Expressed in neuronal stem/progenitor cells at 14.5 dpc (PubMed:24173802).</text>
</comment>
<comment type="PTM">
    <text evidence="1">Phosphorylated during mitosis by CDK1.</text>
</comment>
<comment type="similarity">
    <text evidence="3">Belongs to the TRAFAC class myosin-kinesin ATPase superfamily. Kinesin family.</text>
</comment>
<comment type="sequence caution" evidence="9">
    <conflict type="frameshift">
        <sequence resource="EMBL-CDS" id="AAH48954"/>
    </conflict>
</comment>
<comment type="sequence caution" evidence="9">
    <conflict type="frameshift">
        <sequence resource="EMBL-CDS" id="AAP14646"/>
    </conflict>
</comment>